<gene>
    <name evidence="1" type="primary">rpsC</name>
    <name type="ordered locus">Deide_18890</name>
</gene>
<reference key="1">
    <citation type="journal article" date="2009" name="PLoS Genet.">
        <title>Alliance of proteomics and genomics to unravel the specificities of Sahara bacterium Deinococcus deserti.</title>
        <authorList>
            <person name="de Groot A."/>
            <person name="Dulermo R."/>
            <person name="Ortet P."/>
            <person name="Blanchard L."/>
            <person name="Guerin P."/>
            <person name="Fernandez B."/>
            <person name="Vacherie B."/>
            <person name="Dossat C."/>
            <person name="Jolivet E."/>
            <person name="Siguier P."/>
            <person name="Chandler M."/>
            <person name="Barakat M."/>
            <person name="Dedieu A."/>
            <person name="Barbe V."/>
            <person name="Heulin T."/>
            <person name="Sommer S."/>
            <person name="Achouak W."/>
            <person name="Armengaud J."/>
        </authorList>
    </citation>
    <scope>NUCLEOTIDE SEQUENCE [LARGE SCALE GENOMIC DNA]</scope>
    <source>
        <strain>DSM 17065 / CIP 109153 / LMG 22923 / VCD115</strain>
    </source>
</reference>
<feature type="chain" id="PRO_1000214332" description="Small ribosomal subunit protein uS3">
    <location>
        <begin position="1"/>
        <end position="248"/>
    </location>
</feature>
<feature type="domain" description="KH type-2" evidence="1">
    <location>
        <begin position="39"/>
        <end position="108"/>
    </location>
</feature>
<feature type="region of interest" description="Disordered" evidence="2">
    <location>
        <begin position="214"/>
        <end position="248"/>
    </location>
</feature>
<feature type="compositionally biased region" description="Basic and acidic residues" evidence="2">
    <location>
        <begin position="221"/>
        <end position="234"/>
    </location>
</feature>
<feature type="compositionally biased region" description="Basic residues" evidence="2">
    <location>
        <begin position="235"/>
        <end position="248"/>
    </location>
</feature>
<accession>C1CXG0</accession>
<comment type="function">
    <text evidence="1">Binds the lower part of the 30S subunit head. Binds mRNA in the 70S ribosome, positioning it for translation.</text>
</comment>
<comment type="subunit">
    <text evidence="1">Part of the 30S ribosomal subunit. Forms a tight complex with proteins S10 and S14.</text>
</comment>
<comment type="similarity">
    <text evidence="1">Belongs to the universal ribosomal protein uS3 family.</text>
</comment>
<sequence>MGNKINPNGFRLGITRGWNSRWYAGKKQYAGLLKEDEKIRKLVDKKLSAAGIARVEIERAGQQVNVIISAAKPGIVIGKGGDSIKQLRADIEKLVSAGTVAVNVAEIPNPNISAPLVALRIAEQIERRFAFRRAMKQAAQRVMESGARGVKVVLSGRLGGAEQARRETVREGRVPLHTLRADIDYGTALARTTYGILGIKVMVFTGEVIGGRTETIARPQRRNDERRPEGGDRANRRRPTARRRAGGE</sequence>
<dbReference type="EMBL" id="CP001114">
    <property type="protein sequence ID" value="ACO46877.1"/>
    <property type="molecule type" value="Genomic_DNA"/>
</dbReference>
<dbReference type="RefSeq" id="WP_012693999.1">
    <property type="nucleotide sequence ID" value="NC_012526.1"/>
</dbReference>
<dbReference type="SMR" id="C1CXG0"/>
<dbReference type="STRING" id="546414.Deide_18890"/>
<dbReference type="PaxDb" id="546414-Deide_18890"/>
<dbReference type="KEGG" id="ddr:Deide_18890"/>
<dbReference type="eggNOG" id="COG0092">
    <property type="taxonomic scope" value="Bacteria"/>
</dbReference>
<dbReference type="HOGENOM" id="CLU_058591_0_2_0"/>
<dbReference type="OrthoDB" id="9806396at2"/>
<dbReference type="Proteomes" id="UP000002208">
    <property type="component" value="Chromosome"/>
</dbReference>
<dbReference type="GO" id="GO:0022627">
    <property type="term" value="C:cytosolic small ribosomal subunit"/>
    <property type="evidence" value="ECO:0007669"/>
    <property type="project" value="TreeGrafter"/>
</dbReference>
<dbReference type="GO" id="GO:0003729">
    <property type="term" value="F:mRNA binding"/>
    <property type="evidence" value="ECO:0007669"/>
    <property type="project" value="UniProtKB-UniRule"/>
</dbReference>
<dbReference type="GO" id="GO:0019843">
    <property type="term" value="F:rRNA binding"/>
    <property type="evidence" value="ECO:0007669"/>
    <property type="project" value="UniProtKB-UniRule"/>
</dbReference>
<dbReference type="GO" id="GO:0003735">
    <property type="term" value="F:structural constituent of ribosome"/>
    <property type="evidence" value="ECO:0007669"/>
    <property type="project" value="InterPro"/>
</dbReference>
<dbReference type="GO" id="GO:0006412">
    <property type="term" value="P:translation"/>
    <property type="evidence" value="ECO:0007669"/>
    <property type="project" value="UniProtKB-UniRule"/>
</dbReference>
<dbReference type="CDD" id="cd02412">
    <property type="entry name" value="KH-II_30S_S3"/>
    <property type="match status" value="1"/>
</dbReference>
<dbReference type="FunFam" id="3.30.1140.32:FF:000007">
    <property type="entry name" value="30S ribosomal protein S3"/>
    <property type="match status" value="1"/>
</dbReference>
<dbReference type="FunFam" id="3.30.300.20:FF:000001">
    <property type="entry name" value="30S ribosomal protein S3"/>
    <property type="match status" value="1"/>
</dbReference>
<dbReference type="Gene3D" id="3.30.300.20">
    <property type="match status" value="1"/>
</dbReference>
<dbReference type="Gene3D" id="3.30.1140.32">
    <property type="entry name" value="Ribosomal protein S3, C-terminal domain"/>
    <property type="match status" value="1"/>
</dbReference>
<dbReference type="HAMAP" id="MF_01309_B">
    <property type="entry name" value="Ribosomal_uS3_B"/>
    <property type="match status" value="1"/>
</dbReference>
<dbReference type="InterPro" id="IPR004087">
    <property type="entry name" value="KH_dom"/>
</dbReference>
<dbReference type="InterPro" id="IPR015946">
    <property type="entry name" value="KH_dom-like_a/b"/>
</dbReference>
<dbReference type="InterPro" id="IPR004044">
    <property type="entry name" value="KH_dom_type_2"/>
</dbReference>
<dbReference type="InterPro" id="IPR009019">
    <property type="entry name" value="KH_sf_prok-type"/>
</dbReference>
<dbReference type="InterPro" id="IPR036419">
    <property type="entry name" value="Ribosomal_S3_C_sf"/>
</dbReference>
<dbReference type="InterPro" id="IPR005704">
    <property type="entry name" value="Ribosomal_uS3_bac-typ"/>
</dbReference>
<dbReference type="InterPro" id="IPR001351">
    <property type="entry name" value="Ribosomal_uS3_C"/>
</dbReference>
<dbReference type="InterPro" id="IPR018280">
    <property type="entry name" value="Ribosomal_uS3_CS"/>
</dbReference>
<dbReference type="NCBIfam" id="TIGR01009">
    <property type="entry name" value="rpsC_bact"/>
    <property type="match status" value="1"/>
</dbReference>
<dbReference type="PANTHER" id="PTHR11760">
    <property type="entry name" value="30S/40S RIBOSOMAL PROTEIN S3"/>
    <property type="match status" value="1"/>
</dbReference>
<dbReference type="PANTHER" id="PTHR11760:SF19">
    <property type="entry name" value="SMALL RIBOSOMAL SUBUNIT PROTEIN US3C"/>
    <property type="match status" value="1"/>
</dbReference>
<dbReference type="Pfam" id="PF07650">
    <property type="entry name" value="KH_2"/>
    <property type="match status" value="1"/>
</dbReference>
<dbReference type="Pfam" id="PF00189">
    <property type="entry name" value="Ribosomal_S3_C"/>
    <property type="match status" value="1"/>
</dbReference>
<dbReference type="SMART" id="SM00322">
    <property type="entry name" value="KH"/>
    <property type="match status" value="1"/>
</dbReference>
<dbReference type="SUPFAM" id="SSF54814">
    <property type="entry name" value="Prokaryotic type KH domain (KH-domain type II)"/>
    <property type="match status" value="1"/>
</dbReference>
<dbReference type="SUPFAM" id="SSF54821">
    <property type="entry name" value="Ribosomal protein S3 C-terminal domain"/>
    <property type="match status" value="1"/>
</dbReference>
<dbReference type="PROSITE" id="PS50823">
    <property type="entry name" value="KH_TYPE_2"/>
    <property type="match status" value="1"/>
</dbReference>
<dbReference type="PROSITE" id="PS00548">
    <property type="entry name" value="RIBOSOMAL_S3"/>
    <property type="match status" value="1"/>
</dbReference>
<keyword id="KW-1185">Reference proteome</keyword>
<keyword id="KW-0687">Ribonucleoprotein</keyword>
<keyword id="KW-0689">Ribosomal protein</keyword>
<keyword id="KW-0694">RNA-binding</keyword>
<keyword id="KW-0699">rRNA-binding</keyword>
<evidence type="ECO:0000255" key="1">
    <source>
        <dbReference type="HAMAP-Rule" id="MF_01309"/>
    </source>
</evidence>
<evidence type="ECO:0000256" key="2">
    <source>
        <dbReference type="SAM" id="MobiDB-lite"/>
    </source>
</evidence>
<evidence type="ECO:0000305" key="3"/>
<proteinExistence type="inferred from homology"/>
<name>RS3_DEIDV</name>
<organism>
    <name type="scientific">Deinococcus deserti (strain DSM 17065 / CIP 109153 / LMG 22923 / VCD115)</name>
    <dbReference type="NCBI Taxonomy" id="546414"/>
    <lineage>
        <taxon>Bacteria</taxon>
        <taxon>Thermotogati</taxon>
        <taxon>Deinococcota</taxon>
        <taxon>Deinococci</taxon>
        <taxon>Deinococcales</taxon>
        <taxon>Deinococcaceae</taxon>
        <taxon>Deinococcus</taxon>
    </lineage>
</organism>
<protein>
    <recommendedName>
        <fullName evidence="1">Small ribosomal subunit protein uS3</fullName>
    </recommendedName>
    <alternativeName>
        <fullName evidence="3">30S ribosomal protein S3</fullName>
    </alternativeName>
</protein>